<name>YIDC_PSEA6</name>
<reference key="1">
    <citation type="submission" date="2006-06" db="EMBL/GenBank/DDBJ databases">
        <title>Complete sequence of Pseudoalteromonas atlantica T6c.</title>
        <authorList>
            <consortium name="US DOE Joint Genome Institute"/>
            <person name="Copeland A."/>
            <person name="Lucas S."/>
            <person name="Lapidus A."/>
            <person name="Barry K."/>
            <person name="Detter J.C."/>
            <person name="Glavina del Rio T."/>
            <person name="Hammon N."/>
            <person name="Israni S."/>
            <person name="Dalin E."/>
            <person name="Tice H."/>
            <person name="Pitluck S."/>
            <person name="Saunders E."/>
            <person name="Brettin T."/>
            <person name="Bruce D."/>
            <person name="Han C."/>
            <person name="Tapia R."/>
            <person name="Gilna P."/>
            <person name="Schmutz J."/>
            <person name="Larimer F."/>
            <person name="Land M."/>
            <person name="Hauser L."/>
            <person name="Kyrpides N."/>
            <person name="Kim E."/>
            <person name="Karls A.C."/>
            <person name="Bartlett D."/>
            <person name="Higgins B.P."/>
            <person name="Richardson P."/>
        </authorList>
    </citation>
    <scope>NUCLEOTIDE SEQUENCE [LARGE SCALE GENOMIC DNA]</scope>
    <source>
        <strain>T6c / ATCC BAA-1087</strain>
    </source>
</reference>
<evidence type="ECO:0000255" key="1">
    <source>
        <dbReference type="HAMAP-Rule" id="MF_01810"/>
    </source>
</evidence>
<evidence type="ECO:0000256" key="2">
    <source>
        <dbReference type="SAM" id="MobiDB-lite"/>
    </source>
</evidence>
<gene>
    <name evidence="1" type="primary">yidC</name>
    <name type="ordered locus">Patl_4312</name>
</gene>
<sequence>MESQRSFLLIGLAMVSFLLWQQWQVDYGPQPAQPVESQQTTGSDAPNSNGDVPIATPTNKSALPTQSVVGKVISVTTDTLQLSINTVGGDVISANLLKYPLEQGSQGTYSLLRPSGPTIFVAQSGLVGTNGIDKGSRPTYSVSQDSFVMEGDSLTVPLTYTAKSGLLVTKEFIFSKNSHEVKVNYHVENTSSDVKSVKQFGQLKQSTADQGGSMFMPTYRGGAFSTEDERYEKYSFDDMQDKNLNQVTPAGWTAMIEHYFVSAWVPPQDQTNSLYSKMTQNGNAIIGFIGQSVDIEPGQSVDIQSSLYLGPKDQDTLEKIARGLDLTVDYGFLWWISKYLFAFLQFIHSLIGNWGFSIILITIVVKGAMYPLTKAQYESMAKMRALKPKMDALKERYGDDKQKMQQAMMEMYKKDKVNPMGGCFPLLLQMPIFLALYWVLLESVELRHANFIFWITDLSVKDPYFVLPILTGLSMYLLQKLQPMTMTDPMQQKIMQFMPVAMSLFFFIFPAGLVLYWLISNIITLIQAKIIYASMEKRGLKTK</sequence>
<organism>
    <name type="scientific">Pseudoalteromonas atlantica (strain T6c / ATCC BAA-1087)</name>
    <dbReference type="NCBI Taxonomy" id="3042615"/>
    <lineage>
        <taxon>Bacteria</taxon>
        <taxon>Pseudomonadati</taxon>
        <taxon>Pseudomonadota</taxon>
        <taxon>Gammaproteobacteria</taxon>
        <taxon>Alteromonadales</taxon>
        <taxon>Alteromonadaceae</taxon>
        <taxon>Paraglaciecola</taxon>
    </lineage>
</organism>
<protein>
    <recommendedName>
        <fullName evidence="1">Membrane protein insertase YidC</fullName>
    </recommendedName>
    <alternativeName>
        <fullName evidence="1">Foldase YidC</fullName>
    </alternativeName>
    <alternativeName>
        <fullName evidence="1">Membrane integrase YidC</fullName>
    </alternativeName>
    <alternativeName>
        <fullName evidence="1">Membrane protein YidC</fullName>
    </alternativeName>
</protein>
<accession>Q15MS7</accession>
<dbReference type="EMBL" id="CP000388">
    <property type="protein sequence ID" value="ABG42811.1"/>
    <property type="molecule type" value="Genomic_DNA"/>
</dbReference>
<dbReference type="RefSeq" id="WP_011576990.1">
    <property type="nucleotide sequence ID" value="NC_008228.1"/>
</dbReference>
<dbReference type="SMR" id="Q15MS7"/>
<dbReference type="STRING" id="342610.Patl_4312"/>
<dbReference type="KEGG" id="pat:Patl_4312"/>
<dbReference type="eggNOG" id="COG0706">
    <property type="taxonomic scope" value="Bacteria"/>
</dbReference>
<dbReference type="HOGENOM" id="CLU_016535_3_0_6"/>
<dbReference type="OrthoDB" id="9780552at2"/>
<dbReference type="Proteomes" id="UP000001981">
    <property type="component" value="Chromosome"/>
</dbReference>
<dbReference type="GO" id="GO:0005886">
    <property type="term" value="C:plasma membrane"/>
    <property type="evidence" value="ECO:0007669"/>
    <property type="project" value="UniProtKB-SubCell"/>
</dbReference>
<dbReference type="GO" id="GO:0032977">
    <property type="term" value="F:membrane insertase activity"/>
    <property type="evidence" value="ECO:0007669"/>
    <property type="project" value="InterPro"/>
</dbReference>
<dbReference type="GO" id="GO:0051205">
    <property type="term" value="P:protein insertion into membrane"/>
    <property type="evidence" value="ECO:0007669"/>
    <property type="project" value="TreeGrafter"/>
</dbReference>
<dbReference type="GO" id="GO:0015031">
    <property type="term" value="P:protein transport"/>
    <property type="evidence" value="ECO:0007669"/>
    <property type="project" value="UniProtKB-KW"/>
</dbReference>
<dbReference type="CDD" id="cd20070">
    <property type="entry name" value="5TM_YidC_Alb3"/>
    <property type="match status" value="1"/>
</dbReference>
<dbReference type="CDD" id="cd19961">
    <property type="entry name" value="EcYidC-like_peri"/>
    <property type="match status" value="1"/>
</dbReference>
<dbReference type="Gene3D" id="2.70.98.90">
    <property type="match status" value="1"/>
</dbReference>
<dbReference type="HAMAP" id="MF_01810">
    <property type="entry name" value="YidC_type1"/>
    <property type="match status" value="1"/>
</dbReference>
<dbReference type="InterPro" id="IPR019998">
    <property type="entry name" value="Membr_insert_YidC"/>
</dbReference>
<dbReference type="InterPro" id="IPR028053">
    <property type="entry name" value="Membr_insert_YidC_N"/>
</dbReference>
<dbReference type="InterPro" id="IPR001708">
    <property type="entry name" value="YidC/ALB3/OXA1/COX18"/>
</dbReference>
<dbReference type="InterPro" id="IPR028055">
    <property type="entry name" value="YidC/Oxa/ALB_C"/>
</dbReference>
<dbReference type="InterPro" id="IPR047196">
    <property type="entry name" value="YidC_ALB_C"/>
</dbReference>
<dbReference type="InterPro" id="IPR038221">
    <property type="entry name" value="YidC_periplasmic_sf"/>
</dbReference>
<dbReference type="NCBIfam" id="NF002351">
    <property type="entry name" value="PRK01318.1-1"/>
    <property type="match status" value="1"/>
</dbReference>
<dbReference type="NCBIfam" id="NF002352">
    <property type="entry name" value="PRK01318.1-3"/>
    <property type="match status" value="1"/>
</dbReference>
<dbReference type="NCBIfam" id="TIGR03593">
    <property type="entry name" value="yidC_nterm"/>
    <property type="match status" value="1"/>
</dbReference>
<dbReference type="NCBIfam" id="TIGR03592">
    <property type="entry name" value="yidC_oxa1_cterm"/>
    <property type="match status" value="1"/>
</dbReference>
<dbReference type="PANTHER" id="PTHR12428:SF65">
    <property type="entry name" value="CYTOCHROME C OXIDASE ASSEMBLY PROTEIN COX18, MITOCHONDRIAL"/>
    <property type="match status" value="1"/>
</dbReference>
<dbReference type="PANTHER" id="PTHR12428">
    <property type="entry name" value="OXA1"/>
    <property type="match status" value="1"/>
</dbReference>
<dbReference type="Pfam" id="PF02096">
    <property type="entry name" value="60KD_IMP"/>
    <property type="match status" value="1"/>
</dbReference>
<dbReference type="Pfam" id="PF14849">
    <property type="entry name" value="YidC_periplas"/>
    <property type="match status" value="1"/>
</dbReference>
<dbReference type="PRINTS" id="PR00701">
    <property type="entry name" value="60KDINNERMP"/>
</dbReference>
<dbReference type="PRINTS" id="PR01900">
    <property type="entry name" value="YIDCPROTEIN"/>
</dbReference>
<comment type="function">
    <text evidence="1">Required for the insertion and/or proper folding and/or complex formation of integral membrane proteins into the membrane. Involved in integration of membrane proteins that insert both dependently and independently of the Sec translocase complex, as well as at least some lipoproteins. Aids folding of multispanning membrane proteins.</text>
</comment>
<comment type="subunit">
    <text evidence="1">Interacts with the Sec translocase complex via SecD. Specifically interacts with transmembrane segments of nascent integral membrane proteins during membrane integration.</text>
</comment>
<comment type="subcellular location">
    <subcellularLocation>
        <location evidence="1">Cell inner membrane</location>
        <topology evidence="1">Multi-pass membrane protein</topology>
    </subcellularLocation>
</comment>
<comment type="similarity">
    <text evidence="1">Belongs to the OXA1/ALB3/YidC family. Type 1 subfamily.</text>
</comment>
<feature type="chain" id="PRO_1000070136" description="Membrane protein insertase YidC">
    <location>
        <begin position="1"/>
        <end position="543"/>
    </location>
</feature>
<feature type="transmembrane region" description="Helical" evidence="1">
    <location>
        <begin position="7"/>
        <end position="27"/>
    </location>
</feature>
<feature type="transmembrane region" description="Helical" evidence="1">
    <location>
        <begin position="341"/>
        <end position="361"/>
    </location>
</feature>
<feature type="transmembrane region" description="Helical" evidence="1">
    <location>
        <begin position="421"/>
        <end position="441"/>
    </location>
</feature>
<feature type="transmembrane region" description="Helical" evidence="1">
    <location>
        <begin position="451"/>
        <end position="471"/>
    </location>
</feature>
<feature type="transmembrane region" description="Helical" evidence="1">
    <location>
        <begin position="499"/>
        <end position="519"/>
    </location>
</feature>
<feature type="region of interest" description="Disordered" evidence="2">
    <location>
        <begin position="30"/>
        <end position="61"/>
    </location>
</feature>
<feature type="compositionally biased region" description="Polar residues" evidence="2">
    <location>
        <begin position="35"/>
        <end position="61"/>
    </location>
</feature>
<proteinExistence type="inferred from homology"/>
<keyword id="KW-0997">Cell inner membrane</keyword>
<keyword id="KW-1003">Cell membrane</keyword>
<keyword id="KW-0143">Chaperone</keyword>
<keyword id="KW-0472">Membrane</keyword>
<keyword id="KW-0653">Protein transport</keyword>
<keyword id="KW-0812">Transmembrane</keyword>
<keyword id="KW-1133">Transmembrane helix</keyword>
<keyword id="KW-0813">Transport</keyword>